<feature type="chain" id="PRO_0000181387" description="Nicotinate-nucleotide adenylyltransferase">
    <location>
        <begin position="1"/>
        <end position="189"/>
    </location>
</feature>
<feature type="strand" evidence="2">
    <location>
        <begin position="3"/>
        <end position="9"/>
    </location>
</feature>
<feature type="helix" evidence="2">
    <location>
        <begin position="16"/>
        <end position="28"/>
    </location>
</feature>
<feature type="strand" evidence="2">
    <location>
        <begin position="32"/>
        <end position="38"/>
    </location>
</feature>
<feature type="strand" evidence="3">
    <location>
        <begin position="46"/>
        <end position="48"/>
    </location>
</feature>
<feature type="helix" evidence="2">
    <location>
        <begin position="53"/>
        <end position="64"/>
    </location>
</feature>
<feature type="strand" evidence="2">
    <location>
        <begin position="70"/>
        <end position="72"/>
    </location>
</feature>
<feature type="helix" evidence="2">
    <location>
        <begin position="75"/>
        <end position="77"/>
    </location>
</feature>
<feature type="strand" evidence="3">
    <location>
        <begin position="78"/>
        <end position="81"/>
    </location>
</feature>
<feature type="helix" evidence="2">
    <location>
        <begin position="85"/>
        <end position="95"/>
    </location>
</feature>
<feature type="strand" evidence="2">
    <location>
        <begin position="99"/>
        <end position="106"/>
    </location>
</feature>
<feature type="turn" evidence="2">
    <location>
        <begin position="107"/>
        <end position="112"/>
    </location>
</feature>
<feature type="strand" evidence="3">
    <location>
        <begin position="113"/>
        <end position="116"/>
    </location>
</feature>
<feature type="helix" evidence="2">
    <location>
        <begin position="117"/>
        <end position="125"/>
    </location>
</feature>
<feature type="strand" evidence="2">
    <location>
        <begin position="126"/>
        <end position="132"/>
    </location>
</feature>
<feature type="strand" evidence="2">
    <location>
        <begin position="145"/>
        <end position="148"/>
    </location>
</feature>
<feature type="helix" evidence="2">
    <location>
        <begin position="156"/>
        <end position="165"/>
    </location>
</feature>
<feature type="turn" evidence="2">
    <location>
        <begin position="170"/>
        <end position="172"/>
    </location>
</feature>
<feature type="helix" evidence="2">
    <location>
        <begin position="175"/>
        <end position="183"/>
    </location>
</feature>
<proteinExistence type="evidence at protein level"/>
<comment type="function">
    <text>Catalyzes the reversible adenylation of nicotinate mononucleotide (NaMN) to nicotinic acid adenine dinucleotide (NaAD).</text>
</comment>
<comment type="catalytic activity">
    <reaction>
        <text>nicotinate beta-D-ribonucleotide + ATP + H(+) = deamido-NAD(+) + diphosphate</text>
        <dbReference type="Rhea" id="RHEA:22860"/>
        <dbReference type="ChEBI" id="CHEBI:15378"/>
        <dbReference type="ChEBI" id="CHEBI:30616"/>
        <dbReference type="ChEBI" id="CHEBI:33019"/>
        <dbReference type="ChEBI" id="CHEBI:57502"/>
        <dbReference type="ChEBI" id="CHEBI:58437"/>
        <dbReference type="EC" id="2.7.7.18"/>
    </reaction>
</comment>
<comment type="pathway">
    <text>Cofactor biosynthesis; NAD(+) biosynthesis; deamido-NAD(+) from nicotinate D-ribonucleotide: step 1/1.</text>
</comment>
<comment type="subunit">
    <text>Homodimer.</text>
</comment>
<comment type="similarity">
    <text evidence="1">Belongs to the NadD family.</text>
</comment>
<name>NADD_BACSU</name>
<accession>P54455</accession>
<keyword id="KW-0002">3D-structure</keyword>
<keyword id="KW-0067">ATP-binding</keyword>
<keyword id="KW-0520">NAD</keyword>
<keyword id="KW-0547">Nucleotide-binding</keyword>
<keyword id="KW-0548">Nucleotidyltransferase</keyword>
<keyword id="KW-0662">Pyridine nucleotide biosynthesis</keyword>
<keyword id="KW-1185">Reference proteome</keyword>
<keyword id="KW-0808">Transferase</keyword>
<dbReference type="EC" id="2.7.7.18"/>
<dbReference type="EMBL" id="D84432">
    <property type="protein sequence ID" value="BAA12447.1"/>
    <property type="molecule type" value="Genomic_DNA"/>
</dbReference>
<dbReference type="EMBL" id="AL009126">
    <property type="protein sequence ID" value="CAB14506.1"/>
    <property type="molecule type" value="Genomic_DNA"/>
</dbReference>
<dbReference type="PIR" id="F69951">
    <property type="entry name" value="F69951"/>
</dbReference>
<dbReference type="RefSeq" id="NP_390442.1">
    <property type="nucleotide sequence ID" value="NC_000964.3"/>
</dbReference>
<dbReference type="RefSeq" id="WP_004398676.1">
    <property type="nucleotide sequence ID" value="NZ_OZ025638.1"/>
</dbReference>
<dbReference type="PDB" id="1KAM">
    <property type="method" value="X-ray"/>
    <property type="resolution" value="2.10 A"/>
    <property type="chains" value="A/B/C/D=2-189"/>
</dbReference>
<dbReference type="PDB" id="1KAQ">
    <property type="method" value="X-ray"/>
    <property type="resolution" value="3.20 A"/>
    <property type="chains" value="A/B/C/D/E/F=2-189"/>
</dbReference>
<dbReference type="PDBsum" id="1KAM"/>
<dbReference type="PDBsum" id="1KAQ"/>
<dbReference type="SMR" id="P54455"/>
<dbReference type="FunCoup" id="P54455">
    <property type="interactions" value="545"/>
</dbReference>
<dbReference type="STRING" id="224308.BSU25640"/>
<dbReference type="DrugBank" id="DB04099">
    <property type="generic name" value="Deamido-Nad"/>
</dbReference>
<dbReference type="PaxDb" id="224308-BSU25640"/>
<dbReference type="EnsemblBacteria" id="CAB14506">
    <property type="protein sequence ID" value="CAB14506"/>
    <property type="gene ID" value="BSU_25640"/>
</dbReference>
<dbReference type="GeneID" id="937818"/>
<dbReference type="KEGG" id="bsu:BSU25640"/>
<dbReference type="PATRIC" id="fig|224308.179.peg.2787"/>
<dbReference type="eggNOG" id="COG1057">
    <property type="taxonomic scope" value="Bacteria"/>
</dbReference>
<dbReference type="InParanoid" id="P54455"/>
<dbReference type="OrthoDB" id="5295945at2"/>
<dbReference type="PhylomeDB" id="P54455"/>
<dbReference type="BioCyc" id="BSUB:BSU25640-MONOMER"/>
<dbReference type="BRENDA" id="2.7.7.18">
    <property type="organism ID" value="658"/>
</dbReference>
<dbReference type="UniPathway" id="UPA00253">
    <property type="reaction ID" value="UER00332"/>
</dbReference>
<dbReference type="EvolutionaryTrace" id="P54455"/>
<dbReference type="Proteomes" id="UP000001570">
    <property type="component" value="Chromosome"/>
</dbReference>
<dbReference type="GO" id="GO:0005524">
    <property type="term" value="F:ATP binding"/>
    <property type="evidence" value="ECO:0007669"/>
    <property type="project" value="UniProtKB-KW"/>
</dbReference>
<dbReference type="GO" id="GO:0004515">
    <property type="term" value="F:nicotinate-nucleotide adenylyltransferase activity"/>
    <property type="evidence" value="ECO:0007669"/>
    <property type="project" value="UniProtKB-UniRule"/>
</dbReference>
<dbReference type="GO" id="GO:0009435">
    <property type="term" value="P:NAD biosynthetic process"/>
    <property type="evidence" value="ECO:0007669"/>
    <property type="project" value="UniProtKB-UniRule"/>
</dbReference>
<dbReference type="CDD" id="cd02165">
    <property type="entry name" value="NMNAT"/>
    <property type="match status" value="1"/>
</dbReference>
<dbReference type="FunFam" id="3.40.50.620:FF:000079">
    <property type="entry name" value="Probable nicotinate-nucleotide adenylyltransferase"/>
    <property type="match status" value="1"/>
</dbReference>
<dbReference type="Gene3D" id="3.40.50.620">
    <property type="entry name" value="HUPs"/>
    <property type="match status" value="1"/>
</dbReference>
<dbReference type="HAMAP" id="MF_00244">
    <property type="entry name" value="NaMN_adenylyltr"/>
    <property type="match status" value="1"/>
</dbReference>
<dbReference type="InterPro" id="IPR004821">
    <property type="entry name" value="Cyt_trans-like"/>
</dbReference>
<dbReference type="InterPro" id="IPR005248">
    <property type="entry name" value="NadD/NMNAT"/>
</dbReference>
<dbReference type="InterPro" id="IPR014729">
    <property type="entry name" value="Rossmann-like_a/b/a_fold"/>
</dbReference>
<dbReference type="NCBIfam" id="TIGR00125">
    <property type="entry name" value="cyt_tran_rel"/>
    <property type="match status" value="1"/>
</dbReference>
<dbReference type="NCBIfam" id="TIGR00482">
    <property type="entry name" value="nicotinate (nicotinamide) nucleotide adenylyltransferase"/>
    <property type="match status" value="1"/>
</dbReference>
<dbReference type="NCBIfam" id="NF000840">
    <property type="entry name" value="PRK00071.1-3"/>
    <property type="match status" value="1"/>
</dbReference>
<dbReference type="NCBIfam" id="NF000841">
    <property type="entry name" value="PRK00071.1-4"/>
    <property type="match status" value="1"/>
</dbReference>
<dbReference type="PANTHER" id="PTHR39321">
    <property type="entry name" value="NICOTINATE-NUCLEOTIDE ADENYLYLTRANSFERASE-RELATED"/>
    <property type="match status" value="1"/>
</dbReference>
<dbReference type="PANTHER" id="PTHR39321:SF3">
    <property type="entry name" value="PHOSPHOPANTETHEINE ADENYLYLTRANSFERASE"/>
    <property type="match status" value="1"/>
</dbReference>
<dbReference type="Pfam" id="PF01467">
    <property type="entry name" value="CTP_transf_like"/>
    <property type="match status" value="1"/>
</dbReference>
<dbReference type="SUPFAM" id="SSF52374">
    <property type="entry name" value="Nucleotidylyl transferase"/>
    <property type="match status" value="1"/>
</dbReference>
<protein>
    <recommendedName>
        <fullName>Nicotinate-nucleotide adenylyltransferase</fullName>
        <ecNumber>2.7.7.18</ecNumber>
    </recommendedName>
    <alternativeName>
        <fullName>Deamido-NAD(+) diphosphorylase</fullName>
    </alternativeName>
    <alternativeName>
        <fullName>Deamido-NAD(+) pyrophosphorylase</fullName>
    </alternativeName>
    <alternativeName>
        <fullName>Nicotinate mononucleotide adenylyltransferase</fullName>
        <shortName>NaMN adenylyltransferase</shortName>
    </alternativeName>
</protein>
<organism>
    <name type="scientific">Bacillus subtilis (strain 168)</name>
    <dbReference type="NCBI Taxonomy" id="224308"/>
    <lineage>
        <taxon>Bacteria</taxon>
        <taxon>Bacillati</taxon>
        <taxon>Bacillota</taxon>
        <taxon>Bacilli</taxon>
        <taxon>Bacillales</taxon>
        <taxon>Bacillaceae</taxon>
        <taxon>Bacillus</taxon>
    </lineage>
</organism>
<sequence>MKKIGIFGGTFDPPHNGHLLMANEVLYQAGLDEIWFMPNQIPPHKQNEDYTDSFHRVEMLKLAIQSNPSFKLELVEMEREGPSYTFDTVSLLKQRYPNDQLFFIIGADMIEYLPKWYKLDELLNLIQFIGVKRPGFHVETPYPLLFADVPEFEVSSTMIRERFKSKKPTDYLIPDKVKKYVEENGLYES</sequence>
<reference key="1">
    <citation type="journal article" date="1996" name="Microbiology">
        <title>Systematic sequencing of the 283 kb 210 degrees-232 degrees region of the Bacillus subtilis genome containing the skin element and many sporulation genes.</title>
        <authorList>
            <person name="Mizuno M."/>
            <person name="Masuda S."/>
            <person name="Takemaru K."/>
            <person name="Hosono S."/>
            <person name="Sato T."/>
            <person name="Takeuchi M."/>
            <person name="Kobayashi Y."/>
        </authorList>
    </citation>
    <scope>NUCLEOTIDE SEQUENCE [GENOMIC DNA]</scope>
    <source>
        <strain>168 / JH642</strain>
    </source>
</reference>
<reference key="2">
    <citation type="journal article" date="1997" name="Nature">
        <title>The complete genome sequence of the Gram-positive bacterium Bacillus subtilis.</title>
        <authorList>
            <person name="Kunst F."/>
            <person name="Ogasawara N."/>
            <person name="Moszer I."/>
            <person name="Albertini A.M."/>
            <person name="Alloni G."/>
            <person name="Azevedo V."/>
            <person name="Bertero M.G."/>
            <person name="Bessieres P."/>
            <person name="Bolotin A."/>
            <person name="Borchert S."/>
            <person name="Borriss R."/>
            <person name="Boursier L."/>
            <person name="Brans A."/>
            <person name="Braun M."/>
            <person name="Brignell S.C."/>
            <person name="Bron S."/>
            <person name="Brouillet S."/>
            <person name="Bruschi C.V."/>
            <person name="Caldwell B."/>
            <person name="Capuano V."/>
            <person name="Carter N.M."/>
            <person name="Choi S.-K."/>
            <person name="Codani J.-J."/>
            <person name="Connerton I.F."/>
            <person name="Cummings N.J."/>
            <person name="Daniel R.A."/>
            <person name="Denizot F."/>
            <person name="Devine K.M."/>
            <person name="Duesterhoeft A."/>
            <person name="Ehrlich S.D."/>
            <person name="Emmerson P.T."/>
            <person name="Entian K.-D."/>
            <person name="Errington J."/>
            <person name="Fabret C."/>
            <person name="Ferrari E."/>
            <person name="Foulger D."/>
            <person name="Fritz C."/>
            <person name="Fujita M."/>
            <person name="Fujita Y."/>
            <person name="Fuma S."/>
            <person name="Galizzi A."/>
            <person name="Galleron N."/>
            <person name="Ghim S.-Y."/>
            <person name="Glaser P."/>
            <person name="Goffeau A."/>
            <person name="Golightly E.J."/>
            <person name="Grandi G."/>
            <person name="Guiseppi G."/>
            <person name="Guy B.J."/>
            <person name="Haga K."/>
            <person name="Haiech J."/>
            <person name="Harwood C.R."/>
            <person name="Henaut A."/>
            <person name="Hilbert H."/>
            <person name="Holsappel S."/>
            <person name="Hosono S."/>
            <person name="Hullo M.-F."/>
            <person name="Itaya M."/>
            <person name="Jones L.-M."/>
            <person name="Joris B."/>
            <person name="Karamata D."/>
            <person name="Kasahara Y."/>
            <person name="Klaerr-Blanchard M."/>
            <person name="Klein C."/>
            <person name="Kobayashi Y."/>
            <person name="Koetter P."/>
            <person name="Koningstein G."/>
            <person name="Krogh S."/>
            <person name="Kumano M."/>
            <person name="Kurita K."/>
            <person name="Lapidus A."/>
            <person name="Lardinois S."/>
            <person name="Lauber J."/>
            <person name="Lazarevic V."/>
            <person name="Lee S.-M."/>
            <person name="Levine A."/>
            <person name="Liu H."/>
            <person name="Masuda S."/>
            <person name="Mauel C."/>
            <person name="Medigue C."/>
            <person name="Medina N."/>
            <person name="Mellado R.P."/>
            <person name="Mizuno M."/>
            <person name="Moestl D."/>
            <person name="Nakai S."/>
            <person name="Noback M."/>
            <person name="Noone D."/>
            <person name="O'Reilly M."/>
            <person name="Ogawa K."/>
            <person name="Ogiwara A."/>
            <person name="Oudega B."/>
            <person name="Park S.-H."/>
            <person name="Parro V."/>
            <person name="Pohl T.M."/>
            <person name="Portetelle D."/>
            <person name="Porwollik S."/>
            <person name="Prescott A.M."/>
            <person name="Presecan E."/>
            <person name="Pujic P."/>
            <person name="Purnelle B."/>
            <person name="Rapoport G."/>
            <person name="Rey M."/>
            <person name="Reynolds S."/>
            <person name="Rieger M."/>
            <person name="Rivolta C."/>
            <person name="Rocha E."/>
            <person name="Roche B."/>
            <person name="Rose M."/>
            <person name="Sadaie Y."/>
            <person name="Sato T."/>
            <person name="Scanlan E."/>
            <person name="Schleich S."/>
            <person name="Schroeter R."/>
            <person name="Scoffone F."/>
            <person name="Sekiguchi J."/>
            <person name="Sekowska A."/>
            <person name="Seror S.J."/>
            <person name="Serror P."/>
            <person name="Shin B.-S."/>
            <person name="Soldo B."/>
            <person name="Sorokin A."/>
            <person name="Tacconi E."/>
            <person name="Takagi T."/>
            <person name="Takahashi H."/>
            <person name="Takemaru K."/>
            <person name="Takeuchi M."/>
            <person name="Tamakoshi A."/>
            <person name="Tanaka T."/>
            <person name="Terpstra P."/>
            <person name="Tognoni A."/>
            <person name="Tosato V."/>
            <person name="Uchiyama S."/>
            <person name="Vandenbol M."/>
            <person name="Vannier F."/>
            <person name="Vassarotti A."/>
            <person name="Viari A."/>
            <person name="Wambutt R."/>
            <person name="Wedler E."/>
            <person name="Wedler H."/>
            <person name="Weitzenegger T."/>
            <person name="Winters P."/>
            <person name="Wipat A."/>
            <person name="Yamamoto H."/>
            <person name="Yamane K."/>
            <person name="Yasumoto K."/>
            <person name="Yata K."/>
            <person name="Yoshida K."/>
            <person name="Yoshikawa H.-F."/>
            <person name="Zumstein E."/>
            <person name="Yoshikawa H."/>
            <person name="Danchin A."/>
        </authorList>
    </citation>
    <scope>NUCLEOTIDE SEQUENCE [LARGE SCALE GENOMIC DNA]</scope>
    <source>
        <strain>168</strain>
    </source>
</reference>
<reference key="3">
    <citation type="journal article" date="2002" name="J. Biol. Chem.">
        <title>Identification, characterization, and crystal structure of Bacillus subtilis nicotinic acid mononucleotide adenylyltransferase.</title>
        <authorList>
            <person name="Olland A.M."/>
            <person name="Underwood K.W."/>
            <person name="Czerwinski R.M."/>
            <person name="Lo M.-C."/>
            <person name="Aulabaugh A."/>
            <person name="Bard J."/>
            <person name="Stahl M.L."/>
            <person name="Somers W.S."/>
            <person name="Sullivan F.X."/>
            <person name="Chopra R."/>
        </authorList>
    </citation>
    <scope>CHARACTERIZATION</scope>
    <scope>X-RAY CRYSTALLOGRAPHY (2.1 ANGSTROMS)</scope>
</reference>
<gene>
    <name type="primary">nadD</name>
    <name type="synonym">yqeJ</name>
    <name type="ordered locus">BSU25640</name>
</gene>
<evidence type="ECO:0000305" key="1"/>
<evidence type="ECO:0007829" key="2">
    <source>
        <dbReference type="PDB" id="1KAM"/>
    </source>
</evidence>
<evidence type="ECO:0007829" key="3">
    <source>
        <dbReference type="PDB" id="1KAQ"/>
    </source>
</evidence>